<keyword id="KW-0002">3D-structure</keyword>
<keyword id="KW-0025">Alternative splicing</keyword>
<keyword id="KW-0479">Metal-binding</keyword>
<keyword id="KW-0539">Nucleus</keyword>
<keyword id="KW-0597">Phosphoprotein</keyword>
<keyword id="KW-1267">Proteomics identification</keyword>
<keyword id="KW-1185">Reference proteome</keyword>
<keyword id="KW-0804">Transcription</keyword>
<keyword id="KW-0805">Transcription regulation</keyword>
<keyword id="KW-0862">Zinc</keyword>
<keyword id="KW-0863">Zinc-finger</keyword>
<feature type="chain" id="PRO_0000066113" description="YY1-associated factor 2">
    <location>
        <begin position="1"/>
        <end position="180"/>
    </location>
</feature>
<feature type="zinc finger region" description="RanBP2-type" evidence="1">
    <location>
        <begin position="19"/>
        <end position="48"/>
    </location>
</feature>
<feature type="region of interest" description="Disordered" evidence="2">
    <location>
        <begin position="1"/>
        <end position="24"/>
    </location>
</feature>
<feature type="region of interest" description="Disordered" evidence="2">
    <location>
        <begin position="47"/>
        <end position="120"/>
    </location>
</feature>
<feature type="region of interest" description="Disordered" evidence="2">
    <location>
        <begin position="132"/>
        <end position="180"/>
    </location>
</feature>
<feature type="compositionally biased region" description="Low complexity" evidence="2">
    <location>
        <begin position="62"/>
        <end position="73"/>
    </location>
</feature>
<feature type="compositionally biased region" description="Basic and acidic residues" evidence="2">
    <location>
        <begin position="74"/>
        <end position="93"/>
    </location>
</feature>
<feature type="compositionally biased region" description="Basic residues" evidence="2">
    <location>
        <begin position="95"/>
        <end position="105"/>
    </location>
</feature>
<feature type="compositionally biased region" description="Low complexity" evidence="2">
    <location>
        <begin position="136"/>
        <end position="156"/>
    </location>
</feature>
<feature type="compositionally biased region" description="Low complexity" evidence="2">
    <location>
        <begin position="163"/>
        <end position="174"/>
    </location>
</feature>
<feature type="modified residue" description="Phosphoserine" evidence="10 11">
    <location>
        <position position="167"/>
    </location>
</feature>
<feature type="splice variant" id="VSP_043415" description="In isoform 3." evidence="7">
    <location>
        <begin position="8"/>
        <end position="49"/>
    </location>
</feature>
<feature type="splice variant" id="VSP_055659" description="In isoform 2." evidence="8">
    <original>T</original>
    <variation>TRSTLFEVIVSASRTKEPLKFPISG</variation>
    <location>
        <position position="50"/>
    </location>
</feature>
<feature type="splice variant" id="VSP_044598" description="In isoform 4." evidence="7">
    <original>KPRPVSQLVAQQVTQQFVPPTQSKKEKKDKVEKEKSEKETTSKKNSHKKTRPRLKNVDRSSAQHLE</original>
    <variation>DSKEGGKLVSYSTASLGVRGTLRNRVGGGSSEEKKQAEYLAPGRRRNIVHRGVGPGQRSGPSLKEA</variation>
    <location>
        <begin position="52"/>
        <end position="117"/>
    </location>
</feature>
<feature type="splice variant" id="VSP_044599" description="In isoform 4." evidence="7">
    <location>
        <begin position="118"/>
        <end position="180"/>
    </location>
</feature>
<feature type="sequence conflict" description="In Ref. 1; AAC51116." evidence="9" ref="1">
    <original>QP</original>
    <variation>HA</variation>
    <location>
        <begin position="13"/>
        <end position="14"/>
    </location>
</feature>
<feature type="strand" evidence="12">
    <location>
        <begin position="26"/>
        <end position="28"/>
    </location>
</feature>
<feature type="strand" evidence="12">
    <location>
        <begin position="40"/>
        <end position="42"/>
    </location>
</feature>
<evidence type="ECO:0000255" key="1">
    <source>
        <dbReference type="PROSITE-ProRule" id="PRU00322"/>
    </source>
</evidence>
<evidence type="ECO:0000256" key="2">
    <source>
        <dbReference type="SAM" id="MobiDB-lite"/>
    </source>
</evidence>
<evidence type="ECO:0000269" key="3">
    <source>
    </source>
</evidence>
<evidence type="ECO:0000269" key="4">
    <source>
    </source>
</evidence>
<evidence type="ECO:0000269" key="5">
    <source>
    </source>
</evidence>
<evidence type="ECO:0000269" key="6">
    <source>
    </source>
</evidence>
<evidence type="ECO:0000303" key="7">
    <source>
    </source>
</evidence>
<evidence type="ECO:0000303" key="8">
    <source>
    </source>
</evidence>
<evidence type="ECO:0000305" key="9"/>
<evidence type="ECO:0007744" key="10">
    <source>
    </source>
</evidence>
<evidence type="ECO:0007744" key="11">
    <source>
    </source>
</evidence>
<evidence type="ECO:0007829" key="12">
    <source>
        <dbReference type="PDB" id="2D9G"/>
    </source>
</evidence>
<protein>
    <recommendedName>
        <fullName>YY1-associated factor 2</fullName>
    </recommendedName>
</protein>
<gene>
    <name type="primary">YAF2</name>
</gene>
<name>YAF2_HUMAN</name>
<proteinExistence type="evidence at protein level"/>
<dbReference type="EMBL" id="U72209">
    <property type="protein sequence ID" value="AAC51116.1"/>
    <property type="molecule type" value="mRNA"/>
</dbReference>
<dbReference type="EMBL" id="AK127531">
    <property type="status" value="NOT_ANNOTATED_CDS"/>
    <property type="molecule type" value="mRNA"/>
</dbReference>
<dbReference type="EMBL" id="AK291355">
    <property type="protein sequence ID" value="BAF84044.1"/>
    <property type="molecule type" value="mRNA"/>
</dbReference>
<dbReference type="EMBL" id="AK294260">
    <property type="protein sequence ID" value="BAG57554.1"/>
    <property type="molecule type" value="mRNA"/>
</dbReference>
<dbReference type="EMBL" id="AC020629">
    <property type="status" value="NOT_ANNOTATED_CDS"/>
    <property type="molecule type" value="Genomic_DNA"/>
</dbReference>
<dbReference type="EMBL" id="CH471111">
    <property type="protein sequence ID" value="EAW57839.1"/>
    <property type="molecule type" value="Genomic_DNA"/>
</dbReference>
<dbReference type="EMBL" id="BC037777">
    <property type="protein sequence ID" value="AAH37777.1"/>
    <property type="molecule type" value="mRNA"/>
</dbReference>
<dbReference type="CCDS" id="CCDS31775.1">
    <molecule id="Q8IY57-1"/>
</dbReference>
<dbReference type="CCDS" id="CCDS53778.1">
    <molecule id="Q8IY57-3"/>
</dbReference>
<dbReference type="CCDS" id="CCDS53779.1">
    <molecule id="Q8IY57-5"/>
</dbReference>
<dbReference type="CCDS" id="CCDS53780.1">
    <molecule id="Q8IY57-4"/>
</dbReference>
<dbReference type="RefSeq" id="NP_001177906.1">
    <molecule id="Q8IY57-3"/>
    <property type="nucleotide sequence ID" value="NM_001190977.3"/>
</dbReference>
<dbReference type="RefSeq" id="NP_001177908.1">
    <molecule id="Q8IY57-5"/>
    <property type="nucleotide sequence ID" value="NM_001190979.3"/>
</dbReference>
<dbReference type="RefSeq" id="NP_001177909.1">
    <molecule id="Q8IY57-4"/>
    <property type="nucleotide sequence ID" value="NM_001190980.3"/>
</dbReference>
<dbReference type="RefSeq" id="NP_005739.2">
    <molecule id="Q8IY57-1"/>
    <property type="nucleotide sequence ID" value="NM_005748.6"/>
</dbReference>
<dbReference type="PDB" id="2D9G">
    <property type="method" value="NMR"/>
    <property type="chains" value="A=19-58"/>
</dbReference>
<dbReference type="PDBsum" id="2D9G"/>
<dbReference type="SMR" id="Q8IY57"/>
<dbReference type="BioGRID" id="115441">
    <property type="interactions" value="200"/>
</dbReference>
<dbReference type="ComplexPortal" id="CPX-2260">
    <property type="entry name" value="Non-canonical polycomb repressive complex 1.2, RING1-YAF2 variant"/>
</dbReference>
<dbReference type="ComplexPortal" id="CPX-2272">
    <property type="entry name" value="Non-canonical polycomb repressive complex 1.1, RING2-PCGF1-YAF2 variant"/>
</dbReference>
<dbReference type="ComplexPortal" id="CPX-2274">
    <property type="entry name" value="Non-canonical polycomb repressive complex 1.4, RING1-YAF2 variant"/>
</dbReference>
<dbReference type="ComplexPortal" id="CPX-2280">
    <property type="entry name" value="Non-canonical polycomb repressive complex 1.2, RNF2-YAF2 variant"/>
</dbReference>
<dbReference type="ComplexPortal" id="CPX-2282">
    <property type="entry name" value="Non-canonical polycomb repressive complex 1.4, RNF2-YAF2 variant"/>
</dbReference>
<dbReference type="ComplexPortal" id="CPX-2288">
    <property type="entry name" value="Non-canonical polycomb repressive complex 1.3, RING1-YAF2-CKIIA2 variant"/>
</dbReference>
<dbReference type="ComplexPortal" id="CPX-2289">
    <property type="entry name" value="Non-canonical polycomb repressive complex 1.3, RING1-YAF2-CKIIA1-A2 variant"/>
</dbReference>
<dbReference type="ComplexPortal" id="CPX-2290">
    <property type="entry name" value="Non-canonical polycomb repressive complex 1.3, RING1-YAF2-CKIIA1 variant"/>
</dbReference>
<dbReference type="ComplexPortal" id="CPX-2296">
    <property type="entry name" value="Non-canonical polycomb repressive complex 1.3, RING2-YAF2-CKIIA2 variant"/>
</dbReference>
<dbReference type="ComplexPortal" id="CPX-2297">
    <property type="entry name" value="Non-canonical polycomb repressive complex 1.3, RING2-YAF2-CKIIA1-A2 variant"/>
</dbReference>
<dbReference type="ComplexPortal" id="CPX-2298">
    <property type="entry name" value="Non-canonical polycomb repressive complex 1.3, RING2-YAF2-CKIIA1 variant"/>
</dbReference>
<dbReference type="ComplexPortal" id="CPX-2550">
    <property type="entry name" value="Non-canonical polycomb repressive complex 1.6, RING1-YAF2 variant"/>
</dbReference>
<dbReference type="ComplexPortal" id="CPX-2557">
    <property type="entry name" value="Non-canonical polycomb repressive complex 1.6, RING2-YAF2 variant"/>
</dbReference>
<dbReference type="ComplexPortal" id="CPX-7561">
    <property type="entry name" value="Non-canonical polycomb repressive complex 1.1, RING1-PCGF1-YAF2 variant"/>
</dbReference>
<dbReference type="ComplexPortal" id="CPX-7584">
    <property type="entry name" value="Non-canonical polycomb repressive complex 1.5, RING1-YAF2-CKIIA2 variant"/>
</dbReference>
<dbReference type="ComplexPortal" id="CPX-7585">
    <property type="entry name" value="Non-canonical polycomb repressive complex 1.5, RING1-YAF2-CKIIA1-A2 variant"/>
</dbReference>
<dbReference type="ComplexPortal" id="CPX-7586">
    <property type="entry name" value="Non-canonical polycomb repressive complex 1.5, RING1-YAF2-CKIIA1 variant"/>
</dbReference>
<dbReference type="ComplexPortal" id="CPX-7590">
    <property type="entry name" value="Non-canonical polycomb repressive complex 1.5, RING2-YAF2-CKIIA2 variant"/>
</dbReference>
<dbReference type="ComplexPortal" id="CPX-7591">
    <property type="entry name" value="Non-canonical polycomb repressive complex 1.5, RING2-YAF2-CKIIA1-A2 variant"/>
</dbReference>
<dbReference type="ComplexPortal" id="CPX-7592">
    <property type="entry name" value="Non-canonical polycomb repressive complex 1.5, RING2-YAF2-CKIIA1 variant"/>
</dbReference>
<dbReference type="CORUM" id="Q8IY57"/>
<dbReference type="DIP" id="DIP-44919N"/>
<dbReference type="FunCoup" id="Q8IY57">
    <property type="interactions" value="3856"/>
</dbReference>
<dbReference type="IntAct" id="Q8IY57">
    <property type="interactions" value="109"/>
</dbReference>
<dbReference type="MINT" id="Q8IY57"/>
<dbReference type="STRING" id="9606.ENSP00000328004"/>
<dbReference type="GlyCosmos" id="Q8IY57">
    <property type="glycosylation" value="2 sites, 1 glycan"/>
</dbReference>
<dbReference type="GlyGen" id="Q8IY57">
    <property type="glycosylation" value="2 sites, 1 O-linked glycan (2 sites)"/>
</dbReference>
<dbReference type="iPTMnet" id="Q8IY57"/>
<dbReference type="PhosphoSitePlus" id="Q8IY57"/>
<dbReference type="BioMuta" id="YAF2"/>
<dbReference type="DMDM" id="215274199"/>
<dbReference type="jPOST" id="Q8IY57"/>
<dbReference type="MassIVE" id="Q8IY57"/>
<dbReference type="PeptideAtlas" id="Q8IY57"/>
<dbReference type="ProteomicsDB" id="71112">
    <molecule id="Q8IY57-1"/>
</dbReference>
<dbReference type="ProteomicsDB" id="71114">
    <molecule id="Q8IY57-3"/>
</dbReference>
<dbReference type="Pumba" id="Q8IY57"/>
<dbReference type="Antibodypedia" id="13166">
    <property type="antibodies" value="154 antibodies from 27 providers"/>
</dbReference>
<dbReference type="DNASU" id="10138"/>
<dbReference type="Ensembl" id="ENST00000327791.8">
    <molecule id="Q8IY57-5"/>
    <property type="protein sequence ID" value="ENSP00000328004.5"/>
    <property type="gene ID" value="ENSG00000015153.15"/>
</dbReference>
<dbReference type="Ensembl" id="ENST00000380790.4">
    <molecule id="Q8IY57-3"/>
    <property type="protein sequence ID" value="ENSP00000370167.4"/>
    <property type="gene ID" value="ENSG00000015153.15"/>
</dbReference>
<dbReference type="Ensembl" id="ENST00000534854.7">
    <molecule id="Q8IY57-1"/>
    <property type="protein sequence ID" value="ENSP00000439256.2"/>
    <property type="gene ID" value="ENSG00000015153.15"/>
</dbReference>
<dbReference type="Ensembl" id="ENST00000555248.2">
    <molecule id="Q8IY57-4"/>
    <property type="protein sequence ID" value="ENSP00000451626.2"/>
    <property type="gene ID" value="ENSG00000015153.15"/>
</dbReference>
<dbReference type="GeneID" id="10138"/>
<dbReference type="KEGG" id="hsa:10138"/>
<dbReference type="MANE-Select" id="ENST00000534854.7">
    <property type="protein sequence ID" value="ENSP00000439256.2"/>
    <property type="RefSeq nucleotide sequence ID" value="NM_005748.6"/>
    <property type="RefSeq protein sequence ID" value="NP_005739.2"/>
</dbReference>
<dbReference type="UCSC" id="uc001rmv.4">
    <molecule id="Q8IY57-1"/>
    <property type="organism name" value="human"/>
</dbReference>
<dbReference type="AGR" id="HGNC:17363"/>
<dbReference type="CTD" id="10138"/>
<dbReference type="DisGeNET" id="10138"/>
<dbReference type="GeneCards" id="YAF2"/>
<dbReference type="HGNC" id="HGNC:17363">
    <property type="gene designation" value="YAF2"/>
</dbReference>
<dbReference type="HPA" id="ENSG00000015153">
    <property type="expression patterns" value="Low tissue specificity"/>
</dbReference>
<dbReference type="MIM" id="607534">
    <property type="type" value="gene"/>
</dbReference>
<dbReference type="neXtProt" id="NX_Q8IY57"/>
<dbReference type="OpenTargets" id="ENSG00000015153"/>
<dbReference type="PharmGKB" id="PA38236"/>
<dbReference type="VEuPathDB" id="HostDB:ENSG00000015153"/>
<dbReference type="GeneTree" id="ENSGT00390000013995"/>
<dbReference type="HOGENOM" id="CLU_095374_0_0_1"/>
<dbReference type="InParanoid" id="Q8IY57"/>
<dbReference type="OMA" id="QKRMRPR"/>
<dbReference type="OrthoDB" id="10063208at2759"/>
<dbReference type="PAN-GO" id="Q8IY57">
    <property type="GO annotations" value="4 GO annotations based on evolutionary models"/>
</dbReference>
<dbReference type="PhylomeDB" id="Q8IY57"/>
<dbReference type="TreeFam" id="TF350501"/>
<dbReference type="PathwayCommons" id="Q8IY57"/>
<dbReference type="Reactome" id="R-HSA-8939243">
    <property type="pathway name" value="RUNX1 interacts with co-factors whose precise effect on RUNX1 targets is not known"/>
</dbReference>
<dbReference type="Reactome" id="R-HSA-8953750">
    <property type="pathway name" value="Transcriptional Regulation by E2F6"/>
</dbReference>
<dbReference type="SignaLink" id="Q8IY57"/>
<dbReference type="BioGRID-ORCS" id="10138">
    <property type="hits" value="16 hits in 1162 CRISPR screens"/>
</dbReference>
<dbReference type="CD-CODE" id="91857CE7">
    <property type="entry name" value="Nucleolus"/>
</dbReference>
<dbReference type="ChiTaRS" id="YAF2">
    <property type="organism name" value="human"/>
</dbReference>
<dbReference type="EvolutionaryTrace" id="Q8IY57"/>
<dbReference type="GeneWiki" id="YAF2"/>
<dbReference type="GenomeRNAi" id="10138"/>
<dbReference type="Pharos" id="Q8IY57">
    <property type="development level" value="Tbio"/>
</dbReference>
<dbReference type="PRO" id="PR:Q8IY57"/>
<dbReference type="Proteomes" id="UP000005640">
    <property type="component" value="Chromosome 12"/>
</dbReference>
<dbReference type="RNAct" id="Q8IY57">
    <property type="molecule type" value="protein"/>
</dbReference>
<dbReference type="Bgee" id="ENSG00000015153">
    <property type="expression patterns" value="Expressed in right atrium auricular region and 128 other cell types or tissues"/>
</dbReference>
<dbReference type="ExpressionAtlas" id="Q8IY57">
    <property type="expression patterns" value="baseline and differential"/>
</dbReference>
<dbReference type="GO" id="GO:0005829">
    <property type="term" value="C:cytosol"/>
    <property type="evidence" value="ECO:0000314"/>
    <property type="project" value="HPA"/>
</dbReference>
<dbReference type="GO" id="GO:0005654">
    <property type="term" value="C:nucleoplasm"/>
    <property type="evidence" value="ECO:0000314"/>
    <property type="project" value="HPA"/>
</dbReference>
<dbReference type="GO" id="GO:0005634">
    <property type="term" value="C:nucleus"/>
    <property type="evidence" value="ECO:0000314"/>
    <property type="project" value="UniProtKB"/>
</dbReference>
<dbReference type="GO" id="GO:0003677">
    <property type="term" value="F:DNA binding"/>
    <property type="evidence" value="ECO:0000318"/>
    <property type="project" value="GO_Central"/>
</dbReference>
<dbReference type="GO" id="GO:0003713">
    <property type="term" value="F:transcription coactivator activity"/>
    <property type="evidence" value="ECO:0000314"/>
    <property type="project" value="UniProtKB"/>
</dbReference>
<dbReference type="GO" id="GO:0003712">
    <property type="term" value="F:transcription coregulator activity"/>
    <property type="evidence" value="ECO:0000318"/>
    <property type="project" value="GO_Central"/>
</dbReference>
<dbReference type="GO" id="GO:0003714">
    <property type="term" value="F:transcription corepressor activity"/>
    <property type="evidence" value="ECO:0000314"/>
    <property type="project" value="UniProtKB"/>
</dbReference>
<dbReference type="GO" id="GO:0008270">
    <property type="term" value="F:zinc ion binding"/>
    <property type="evidence" value="ECO:0007669"/>
    <property type="project" value="UniProtKB-KW"/>
</dbReference>
<dbReference type="GO" id="GO:0045892">
    <property type="term" value="P:negative regulation of DNA-templated transcription"/>
    <property type="evidence" value="ECO:0000314"/>
    <property type="project" value="UniProtKB"/>
</dbReference>
<dbReference type="GO" id="GO:0045893">
    <property type="term" value="P:positive regulation of DNA-templated transcription"/>
    <property type="evidence" value="ECO:0000314"/>
    <property type="project" value="UniProtKB"/>
</dbReference>
<dbReference type="GO" id="GO:0006355">
    <property type="term" value="P:regulation of DNA-templated transcription"/>
    <property type="evidence" value="ECO:0000318"/>
    <property type="project" value="GO_Central"/>
</dbReference>
<dbReference type="FunFam" id="4.10.1060.10:FF:000009">
    <property type="entry name" value="YY1 associated factor 2"/>
    <property type="match status" value="1"/>
</dbReference>
<dbReference type="Gene3D" id="4.10.1060.10">
    <property type="entry name" value="Zinc finger, RanBP2-type"/>
    <property type="match status" value="1"/>
</dbReference>
<dbReference type="InterPro" id="IPR039958">
    <property type="entry name" value="RYBP/YAF2"/>
</dbReference>
<dbReference type="InterPro" id="IPR033774">
    <property type="entry name" value="YAF2_RYBP"/>
</dbReference>
<dbReference type="InterPro" id="IPR001876">
    <property type="entry name" value="Znf_RanBP2"/>
</dbReference>
<dbReference type="InterPro" id="IPR036443">
    <property type="entry name" value="Znf_RanBP2_sf"/>
</dbReference>
<dbReference type="PANTHER" id="PTHR12920">
    <property type="entry name" value="RYBP AND YAF2-RELATED"/>
    <property type="match status" value="1"/>
</dbReference>
<dbReference type="PANTHER" id="PTHR12920:SF2">
    <property type="entry name" value="YY1-ASSOCIATED FACTOR 2"/>
    <property type="match status" value="1"/>
</dbReference>
<dbReference type="Pfam" id="PF17219">
    <property type="entry name" value="YAF2_RYBP"/>
    <property type="match status" value="1"/>
</dbReference>
<dbReference type="Pfam" id="PF00641">
    <property type="entry name" value="Zn_ribbon_RanBP"/>
    <property type="match status" value="1"/>
</dbReference>
<dbReference type="SMART" id="SM00547">
    <property type="entry name" value="ZnF_RBZ"/>
    <property type="match status" value="1"/>
</dbReference>
<dbReference type="SUPFAM" id="SSF90209">
    <property type="entry name" value="Ran binding protein zinc finger-like"/>
    <property type="match status" value="1"/>
</dbReference>
<dbReference type="PROSITE" id="PS01358">
    <property type="entry name" value="ZF_RANBP2_1"/>
    <property type="match status" value="1"/>
</dbReference>
<dbReference type="PROSITE" id="PS50199">
    <property type="entry name" value="ZF_RANBP2_2"/>
    <property type="match status" value="1"/>
</dbReference>
<accession>Q8IY57</accession>
<accession>A8K5P0</accession>
<accession>B4DFU3</accession>
<accession>G3V465</accession>
<accession>Q99710</accession>
<organism>
    <name type="scientific">Homo sapiens</name>
    <name type="common">Human</name>
    <dbReference type="NCBI Taxonomy" id="9606"/>
    <lineage>
        <taxon>Eukaryota</taxon>
        <taxon>Metazoa</taxon>
        <taxon>Chordata</taxon>
        <taxon>Craniata</taxon>
        <taxon>Vertebrata</taxon>
        <taxon>Euteleostomi</taxon>
        <taxon>Mammalia</taxon>
        <taxon>Eutheria</taxon>
        <taxon>Euarchontoglires</taxon>
        <taxon>Primates</taxon>
        <taxon>Haplorrhini</taxon>
        <taxon>Catarrhini</taxon>
        <taxon>Hominidae</taxon>
        <taxon>Homo</taxon>
    </lineage>
</organism>
<comment type="function">
    <text evidence="3 5 6">Binds to MYC and inhibits MYC-mediated transactivation. Also binds to MYCN and enhances MYCN-dependent transcriptional activation. Increases calpain 2-mediated proteolysis of YY1 in vitro. Component of the E2F6.com-1 complex, a repressive complex that methylates 'Lys-9' of histone H3, suggesting that it is involved in chromatin-remodeling.</text>
</comment>
<comment type="subunit">
    <text evidence="3 4 5 6">Interacts with MYC, MYCN, RNF2/RING1B and YY1. Part of the E2F6.com-1 complex in G0 phase composed of E2F6, MGA, MAX, TFDP1, CBX3, BAT8, EUHMTASE1, RING1, RNF2, MBLR, L3MBTL2 and YAF2.</text>
</comment>
<comment type="interaction">
    <interactant intactId="EBI-2842031">
        <id>Q8IY57</id>
    </interactant>
    <interactant intactId="EBI-752313">
        <id>Q06587</id>
        <label>RING1</label>
    </interactant>
    <organismsDiffer>false</organismsDiffer>
    <experiments>10</experiments>
</comment>
<comment type="interaction">
    <interactant intactId="EBI-2842031">
        <id>Q8IY57</id>
    </interactant>
    <interactant intactId="EBI-2548259">
        <id>Q9Y6X0</id>
        <label>SETBP1</label>
    </interactant>
    <organismsDiffer>false</organismsDiffer>
    <experiments>3</experiments>
</comment>
<comment type="interaction">
    <interactant intactId="EBI-2842031">
        <id>Q8IY57</id>
    </interactant>
    <interactant intactId="EBI-2340004">
        <id>Q9HD64</id>
        <label>XAGE1B</label>
    </interactant>
    <organismsDiffer>false</organismsDiffer>
    <experiments>3</experiments>
</comment>
<comment type="interaction">
    <interactant intactId="EBI-12111538">
        <id>Q8IY57-5</id>
    </interactant>
    <interactant intactId="EBI-762428">
        <id>Q92688</id>
        <label>ANP32B</label>
    </interactant>
    <organismsDiffer>false</organismsDiffer>
    <experiments>3</experiments>
</comment>
<comment type="interaction">
    <interactant intactId="EBI-12111538">
        <id>Q8IY57-5</id>
    </interactant>
    <interactant intactId="EBI-2559016">
        <id>Q6NZI2</id>
        <label>CAVIN1</label>
    </interactant>
    <organismsDiffer>false</organismsDiffer>
    <experiments>3</experiments>
</comment>
<comment type="interaction">
    <interactant intactId="EBI-12111538">
        <id>Q8IY57-5</id>
    </interactant>
    <interactant intactId="EBI-17784261">
        <id>Q8TDQ1-4</id>
        <label>CD300LF</label>
    </interactant>
    <organismsDiffer>false</organismsDiffer>
    <experiments>3</experiments>
</comment>
<comment type="interaction">
    <interactant intactId="EBI-12111538">
        <id>Q8IY57-5</id>
    </interactant>
    <interactant intactId="EBI-10976677">
        <id>G5E9A7</id>
        <label>DMWD</label>
    </interactant>
    <organismsDiffer>false</organismsDiffer>
    <experiments>3</experiments>
</comment>
<comment type="interaction">
    <interactant intactId="EBI-12111538">
        <id>Q8IY57-5</id>
    </interactant>
    <interactant intactId="EBI-10239299">
        <id>Q9NQM4</id>
        <label>DNAAF6</label>
    </interactant>
    <organismsDiffer>false</organismsDiffer>
    <experiments>3</experiments>
</comment>
<comment type="interaction">
    <interactant intactId="EBI-12111538">
        <id>Q8IY57-5</id>
    </interactant>
    <interactant intactId="EBI-769261">
        <id>Q96JC9</id>
        <label>EAF1</label>
    </interactant>
    <organismsDiffer>false</organismsDiffer>
    <experiments>5</experiments>
</comment>
<comment type="interaction">
    <interactant intactId="EBI-12111538">
        <id>Q8IY57-5</id>
    </interactant>
    <interactant intactId="EBI-747754">
        <id>P28799</id>
        <label>GRN</label>
    </interactant>
    <organismsDiffer>false</organismsDiffer>
    <experiments>3</experiments>
</comment>
<comment type="interaction">
    <interactant intactId="EBI-12111538">
        <id>Q8IY57-5</id>
    </interactant>
    <interactant intactId="EBI-725672">
        <id>Q9NWB7</id>
        <label>IFT57</label>
    </interactant>
    <organismsDiffer>false</organismsDiffer>
    <experiments>3</experiments>
</comment>
<comment type="interaction">
    <interactant intactId="EBI-12111538">
        <id>Q8IY57-5</id>
    </interactant>
    <interactant intactId="EBI-715611">
        <id>Q9C086</id>
        <label>INO80B</label>
    </interactant>
    <organismsDiffer>false</organismsDiffer>
    <experiments>3</experiments>
</comment>
<comment type="interaction">
    <interactant intactId="EBI-12111538">
        <id>Q8IY57-5</id>
    </interactant>
    <interactant intactId="EBI-357504">
        <id>P47929</id>
        <label>LGALS7B</label>
    </interactant>
    <organismsDiffer>false</organismsDiffer>
    <experiments>3</experiments>
</comment>
<comment type="interaction">
    <interactant intactId="EBI-12111538">
        <id>Q8IY57-5</id>
    </interactant>
    <interactant intactId="EBI-726739">
        <id>Q9UPY8</id>
        <label>MAPRE3</label>
    </interactant>
    <organismsDiffer>false</organismsDiffer>
    <experiments>3</experiments>
</comment>
<comment type="interaction">
    <interactant intactId="EBI-12111538">
        <id>Q8IY57-5</id>
    </interactant>
    <interactant intactId="EBI-968587">
        <id>Q9P0L2</id>
        <label>MARK1</label>
    </interactant>
    <organismsDiffer>false</organismsDiffer>
    <experiments>3</experiments>
</comment>
<comment type="interaction">
    <interactant intactId="EBI-12111538">
        <id>Q8IY57-5</id>
    </interactant>
    <interactant intactId="EBI-591778">
        <id>P61970</id>
        <label>NUTF2</label>
    </interactant>
    <organismsDiffer>false</organismsDiffer>
    <experiments>3</experiments>
</comment>
<comment type="interaction">
    <interactant intactId="EBI-12111538">
        <id>Q8IY57-5</id>
    </interactant>
    <interactant intactId="EBI-947061">
        <id>O14917</id>
        <label>PCDH17</label>
    </interactant>
    <organismsDiffer>false</organismsDiffer>
    <experiments>3</experiments>
</comment>
<comment type="interaction">
    <interactant intactId="EBI-12111538">
        <id>Q8IY57-5</id>
    </interactant>
    <interactant intactId="EBI-2855862">
        <id>Q9BT43</id>
        <label>POLR3GL</label>
    </interactant>
    <organismsDiffer>false</organismsDiffer>
    <experiments>3</experiments>
</comment>
<comment type="interaction">
    <interactant intactId="EBI-12111538">
        <id>Q8IY57-5</id>
    </interactant>
    <interactant intactId="EBI-1048104">
        <id>O60927</id>
        <label>PPP1R11</label>
    </interactant>
    <organismsDiffer>false</organismsDiffer>
    <experiments>3</experiments>
</comment>
<comment type="interaction">
    <interactant intactId="EBI-12111538">
        <id>Q8IY57-5</id>
    </interactant>
    <interactant intactId="EBI-752313">
        <id>Q06587</id>
        <label>RING1</label>
    </interactant>
    <organismsDiffer>false</organismsDiffer>
    <experiments>8</experiments>
</comment>
<comment type="interaction">
    <interactant intactId="EBI-12111538">
        <id>Q8IY57-5</id>
    </interactant>
    <interactant intactId="EBI-722416">
        <id>Q99496</id>
        <label>RNF2</label>
    </interactant>
    <organismsDiffer>false</organismsDiffer>
    <experiments>5</experiments>
</comment>
<comment type="interaction">
    <interactant intactId="EBI-12111538">
        <id>Q8IY57-5</id>
    </interactant>
    <interactant intactId="EBI-12023934">
        <id>Q5MJ10</id>
        <label>SPANXN2</label>
    </interactant>
    <organismsDiffer>false</organismsDiffer>
    <experiments>3</experiments>
</comment>
<comment type="interaction">
    <interactant intactId="EBI-12111538">
        <id>Q8IY57-5</id>
    </interactant>
    <interactant intactId="EBI-12037215">
        <id>Q5MJ09</id>
        <label>SPANXN3</label>
    </interactant>
    <organismsDiffer>false</organismsDiffer>
    <experiments>3</experiments>
</comment>
<comment type="interaction">
    <interactant intactId="EBI-12111538">
        <id>Q8IY57-5</id>
    </interactant>
    <interactant intactId="EBI-5235340">
        <id>Q7Z699</id>
        <label>SPRED1</label>
    </interactant>
    <organismsDiffer>false</organismsDiffer>
    <experiments>3</experiments>
</comment>
<comment type="interaction">
    <interactant intactId="EBI-12111538">
        <id>Q8IY57-5</id>
    </interactant>
    <interactant intactId="EBI-740492">
        <id>Q9UKI8</id>
        <label>TLK1</label>
    </interactant>
    <organismsDiffer>false</organismsDiffer>
    <experiments>3</experiments>
</comment>
<comment type="subcellular location">
    <subcellularLocation>
        <location evidence="3">Nucleus</location>
    </subcellularLocation>
</comment>
<comment type="alternative products">
    <event type="alternative splicing"/>
    <isoform>
        <id>Q8IY57-1</id>
        <name>1</name>
        <sequence type="displayed"/>
    </isoform>
    <isoform>
        <id>Q8IY57-5</id>
        <name>2</name>
        <sequence type="described" ref="VSP_055659"/>
    </isoform>
    <isoform>
        <id>Q8IY57-3</id>
        <name>3</name>
        <sequence type="described" ref="VSP_043415"/>
    </isoform>
    <isoform>
        <id>Q8IY57-4</id>
        <name>4</name>
        <sequence type="described" ref="VSP_044598 VSP_044599"/>
    </isoform>
</comment>
<reference key="1">
    <citation type="journal article" date="1997" name="Nucleic Acids Res.">
        <title>Yeast two-hybrid cloning of a novel zinc finger protein that interacts with the multifunctional transcription factor YY1.</title>
        <authorList>
            <person name="Kalenik J.L."/>
            <person name="Chen D."/>
            <person name="Bradley M.E."/>
            <person name="Chen S.-J."/>
            <person name="Lee T.-C."/>
        </authorList>
    </citation>
    <scope>NUCLEOTIDE SEQUENCE [MRNA] (ISOFORM 1)</scope>
    <scope>FUNCTION</scope>
    <scope>INTERACTION WITH YY1</scope>
    <source>
        <tissue>Skeletal muscle</tissue>
    </source>
</reference>
<reference key="2">
    <citation type="journal article" date="2004" name="Nat. Genet.">
        <title>Complete sequencing and characterization of 21,243 full-length human cDNAs.</title>
        <authorList>
            <person name="Ota T."/>
            <person name="Suzuki Y."/>
            <person name="Nishikawa T."/>
            <person name="Otsuki T."/>
            <person name="Sugiyama T."/>
            <person name="Irie R."/>
            <person name="Wakamatsu A."/>
            <person name="Hayashi K."/>
            <person name="Sato H."/>
            <person name="Nagai K."/>
            <person name="Kimura K."/>
            <person name="Makita H."/>
            <person name="Sekine M."/>
            <person name="Obayashi M."/>
            <person name="Nishi T."/>
            <person name="Shibahara T."/>
            <person name="Tanaka T."/>
            <person name="Ishii S."/>
            <person name="Yamamoto J."/>
            <person name="Saito K."/>
            <person name="Kawai Y."/>
            <person name="Isono Y."/>
            <person name="Nakamura Y."/>
            <person name="Nagahari K."/>
            <person name="Murakami K."/>
            <person name="Yasuda T."/>
            <person name="Iwayanagi T."/>
            <person name="Wagatsuma M."/>
            <person name="Shiratori A."/>
            <person name="Sudo H."/>
            <person name="Hosoiri T."/>
            <person name="Kaku Y."/>
            <person name="Kodaira H."/>
            <person name="Kondo H."/>
            <person name="Sugawara M."/>
            <person name="Takahashi M."/>
            <person name="Kanda K."/>
            <person name="Yokoi T."/>
            <person name="Furuya T."/>
            <person name="Kikkawa E."/>
            <person name="Omura Y."/>
            <person name="Abe K."/>
            <person name="Kamihara K."/>
            <person name="Katsuta N."/>
            <person name="Sato K."/>
            <person name="Tanikawa M."/>
            <person name="Yamazaki M."/>
            <person name="Ninomiya K."/>
            <person name="Ishibashi T."/>
            <person name="Yamashita H."/>
            <person name="Murakawa K."/>
            <person name="Fujimori K."/>
            <person name="Tanai H."/>
            <person name="Kimata M."/>
            <person name="Watanabe M."/>
            <person name="Hiraoka S."/>
            <person name="Chiba Y."/>
            <person name="Ishida S."/>
            <person name="Ono Y."/>
            <person name="Takiguchi S."/>
            <person name="Watanabe S."/>
            <person name="Yosida M."/>
            <person name="Hotuta T."/>
            <person name="Kusano J."/>
            <person name="Kanehori K."/>
            <person name="Takahashi-Fujii A."/>
            <person name="Hara H."/>
            <person name="Tanase T.-O."/>
            <person name="Nomura Y."/>
            <person name="Togiya S."/>
            <person name="Komai F."/>
            <person name="Hara R."/>
            <person name="Takeuchi K."/>
            <person name="Arita M."/>
            <person name="Imose N."/>
            <person name="Musashino K."/>
            <person name="Yuuki H."/>
            <person name="Oshima A."/>
            <person name="Sasaki N."/>
            <person name="Aotsuka S."/>
            <person name="Yoshikawa Y."/>
            <person name="Matsunawa H."/>
            <person name="Ichihara T."/>
            <person name="Shiohata N."/>
            <person name="Sano S."/>
            <person name="Moriya S."/>
            <person name="Momiyama H."/>
            <person name="Satoh N."/>
            <person name="Takami S."/>
            <person name="Terashima Y."/>
            <person name="Suzuki O."/>
            <person name="Nakagawa S."/>
            <person name="Senoh A."/>
            <person name="Mizoguchi H."/>
            <person name="Goto Y."/>
            <person name="Shimizu F."/>
            <person name="Wakebe H."/>
            <person name="Hishigaki H."/>
            <person name="Watanabe T."/>
            <person name="Sugiyama A."/>
            <person name="Takemoto M."/>
            <person name="Kawakami B."/>
            <person name="Yamazaki M."/>
            <person name="Watanabe K."/>
            <person name="Kumagai A."/>
            <person name="Itakura S."/>
            <person name="Fukuzumi Y."/>
            <person name="Fujimori Y."/>
            <person name="Komiyama M."/>
            <person name="Tashiro H."/>
            <person name="Tanigami A."/>
            <person name="Fujiwara T."/>
            <person name="Ono T."/>
            <person name="Yamada K."/>
            <person name="Fujii Y."/>
            <person name="Ozaki K."/>
            <person name="Hirao M."/>
            <person name="Ohmori Y."/>
            <person name="Kawabata A."/>
            <person name="Hikiji T."/>
            <person name="Kobatake N."/>
            <person name="Inagaki H."/>
            <person name="Ikema Y."/>
            <person name="Okamoto S."/>
            <person name="Okitani R."/>
            <person name="Kawakami T."/>
            <person name="Noguchi S."/>
            <person name="Itoh T."/>
            <person name="Shigeta K."/>
            <person name="Senba T."/>
            <person name="Matsumura K."/>
            <person name="Nakajima Y."/>
            <person name="Mizuno T."/>
            <person name="Morinaga M."/>
            <person name="Sasaki M."/>
            <person name="Togashi T."/>
            <person name="Oyama M."/>
            <person name="Hata H."/>
            <person name="Watanabe M."/>
            <person name="Komatsu T."/>
            <person name="Mizushima-Sugano J."/>
            <person name="Satoh T."/>
            <person name="Shirai Y."/>
            <person name="Takahashi Y."/>
            <person name="Nakagawa K."/>
            <person name="Okumura K."/>
            <person name="Nagase T."/>
            <person name="Nomura N."/>
            <person name="Kikuchi H."/>
            <person name="Masuho Y."/>
            <person name="Yamashita R."/>
            <person name="Nakai K."/>
            <person name="Yada T."/>
            <person name="Nakamura Y."/>
            <person name="Ohara O."/>
            <person name="Isogai T."/>
            <person name="Sugano S."/>
        </authorList>
    </citation>
    <scope>NUCLEOTIDE SEQUENCE [LARGE SCALE MRNA] (ISOFORMS 1; 3 AND 4)</scope>
    <source>
        <tissue>Amygdala</tissue>
        <tissue>Brain</tissue>
        <tissue>Thalamus</tissue>
    </source>
</reference>
<reference key="3">
    <citation type="journal article" date="2006" name="Nature">
        <title>The finished DNA sequence of human chromosome 12.</title>
        <authorList>
            <person name="Scherer S.E."/>
            <person name="Muzny D.M."/>
            <person name="Buhay C.J."/>
            <person name="Chen R."/>
            <person name="Cree A."/>
            <person name="Ding Y."/>
            <person name="Dugan-Rocha S."/>
            <person name="Gill R."/>
            <person name="Gunaratne P."/>
            <person name="Harris R.A."/>
            <person name="Hawes A.C."/>
            <person name="Hernandez J."/>
            <person name="Hodgson A.V."/>
            <person name="Hume J."/>
            <person name="Jackson A."/>
            <person name="Khan Z.M."/>
            <person name="Kovar-Smith C."/>
            <person name="Lewis L.R."/>
            <person name="Lozado R.J."/>
            <person name="Metzker M.L."/>
            <person name="Milosavljevic A."/>
            <person name="Miner G.R."/>
            <person name="Montgomery K.T."/>
            <person name="Morgan M.B."/>
            <person name="Nazareth L.V."/>
            <person name="Scott G."/>
            <person name="Sodergren E."/>
            <person name="Song X.-Z."/>
            <person name="Steffen D."/>
            <person name="Lovering R.C."/>
            <person name="Wheeler D.A."/>
            <person name="Worley K.C."/>
            <person name="Yuan Y."/>
            <person name="Zhang Z."/>
            <person name="Adams C.Q."/>
            <person name="Ansari-Lari M.A."/>
            <person name="Ayele M."/>
            <person name="Brown M.J."/>
            <person name="Chen G."/>
            <person name="Chen Z."/>
            <person name="Clerc-Blankenburg K.P."/>
            <person name="Davis C."/>
            <person name="Delgado O."/>
            <person name="Dinh H.H."/>
            <person name="Draper H."/>
            <person name="Gonzalez-Garay M.L."/>
            <person name="Havlak P."/>
            <person name="Jackson L.R."/>
            <person name="Jacob L.S."/>
            <person name="Kelly S.H."/>
            <person name="Li L."/>
            <person name="Li Z."/>
            <person name="Liu J."/>
            <person name="Liu W."/>
            <person name="Lu J."/>
            <person name="Maheshwari M."/>
            <person name="Nguyen B.-V."/>
            <person name="Okwuonu G.O."/>
            <person name="Pasternak S."/>
            <person name="Perez L.M."/>
            <person name="Plopper F.J.H."/>
            <person name="Santibanez J."/>
            <person name="Shen H."/>
            <person name="Tabor P.E."/>
            <person name="Verduzco D."/>
            <person name="Waldron L."/>
            <person name="Wang Q."/>
            <person name="Williams G.A."/>
            <person name="Zhang J."/>
            <person name="Zhou J."/>
            <person name="Allen C.C."/>
            <person name="Amin A.G."/>
            <person name="Anyalebechi V."/>
            <person name="Bailey M."/>
            <person name="Barbaria J.A."/>
            <person name="Bimage K.E."/>
            <person name="Bryant N.P."/>
            <person name="Burch P.E."/>
            <person name="Burkett C.E."/>
            <person name="Burrell K.L."/>
            <person name="Calderon E."/>
            <person name="Cardenas V."/>
            <person name="Carter K."/>
            <person name="Casias K."/>
            <person name="Cavazos I."/>
            <person name="Cavazos S.R."/>
            <person name="Ceasar H."/>
            <person name="Chacko J."/>
            <person name="Chan S.N."/>
            <person name="Chavez D."/>
            <person name="Christopoulos C."/>
            <person name="Chu J."/>
            <person name="Cockrell R."/>
            <person name="Cox C.D."/>
            <person name="Dang M."/>
            <person name="Dathorne S.R."/>
            <person name="David R."/>
            <person name="Davis C.M."/>
            <person name="Davy-Carroll L."/>
            <person name="Deshazo D.R."/>
            <person name="Donlin J.E."/>
            <person name="D'Souza L."/>
            <person name="Eaves K.A."/>
            <person name="Egan A."/>
            <person name="Emery-Cohen A.J."/>
            <person name="Escotto M."/>
            <person name="Flagg N."/>
            <person name="Forbes L.D."/>
            <person name="Gabisi A.M."/>
            <person name="Garza M."/>
            <person name="Hamilton C."/>
            <person name="Henderson N."/>
            <person name="Hernandez O."/>
            <person name="Hines S."/>
            <person name="Hogues M.E."/>
            <person name="Huang M."/>
            <person name="Idlebird D.G."/>
            <person name="Johnson R."/>
            <person name="Jolivet A."/>
            <person name="Jones S."/>
            <person name="Kagan R."/>
            <person name="King L.M."/>
            <person name="Leal B."/>
            <person name="Lebow H."/>
            <person name="Lee S."/>
            <person name="LeVan J.M."/>
            <person name="Lewis L.C."/>
            <person name="London P."/>
            <person name="Lorensuhewa L.M."/>
            <person name="Loulseged H."/>
            <person name="Lovett D.A."/>
            <person name="Lucier A."/>
            <person name="Lucier R.L."/>
            <person name="Ma J."/>
            <person name="Madu R.C."/>
            <person name="Mapua P."/>
            <person name="Martindale A.D."/>
            <person name="Martinez E."/>
            <person name="Massey E."/>
            <person name="Mawhiney S."/>
            <person name="Meador M.G."/>
            <person name="Mendez S."/>
            <person name="Mercado C."/>
            <person name="Mercado I.C."/>
            <person name="Merritt C.E."/>
            <person name="Miner Z.L."/>
            <person name="Minja E."/>
            <person name="Mitchell T."/>
            <person name="Mohabbat F."/>
            <person name="Mohabbat K."/>
            <person name="Montgomery B."/>
            <person name="Moore N."/>
            <person name="Morris S."/>
            <person name="Munidasa M."/>
            <person name="Ngo R.N."/>
            <person name="Nguyen N.B."/>
            <person name="Nickerson E."/>
            <person name="Nwaokelemeh O.O."/>
            <person name="Nwokenkwo S."/>
            <person name="Obregon M."/>
            <person name="Oguh M."/>
            <person name="Oragunye N."/>
            <person name="Oviedo R.J."/>
            <person name="Parish B.J."/>
            <person name="Parker D.N."/>
            <person name="Parrish J."/>
            <person name="Parks K.L."/>
            <person name="Paul H.A."/>
            <person name="Payton B.A."/>
            <person name="Perez A."/>
            <person name="Perrin W."/>
            <person name="Pickens A."/>
            <person name="Primus E.L."/>
            <person name="Pu L.-L."/>
            <person name="Puazo M."/>
            <person name="Quiles M.M."/>
            <person name="Quiroz J.B."/>
            <person name="Rabata D."/>
            <person name="Reeves K."/>
            <person name="Ruiz S.J."/>
            <person name="Shao H."/>
            <person name="Sisson I."/>
            <person name="Sonaike T."/>
            <person name="Sorelle R.P."/>
            <person name="Sutton A.E."/>
            <person name="Svatek A.F."/>
            <person name="Svetz L.A."/>
            <person name="Tamerisa K.S."/>
            <person name="Taylor T.R."/>
            <person name="Teague B."/>
            <person name="Thomas N."/>
            <person name="Thorn R.D."/>
            <person name="Trejos Z.Y."/>
            <person name="Trevino B.K."/>
            <person name="Ukegbu O.N."/>
            <person name="Urban J.B."/>
            <person name="Vasquez L.I."/>
            <person name="Vera V.A."/>
            <person name="Villasana D.M."/>
            <person name="Wang L."/>
            <person name="Ward-Moore S."/>
            <person name="Warren J.T."/>
            <person name="Wei X."/>
            <person name="White F."/>
            <person name="Williamson A.L."/>
            <person name="Wleczyk R."/>
            <person name="Wooden H.S."/>
            <person name="Wooden S.H."/>
            <person name="Yen J."/>
            <person name="Yoon L."/>
            <person name="Yoon V."/>
            <person name="Zorrilla S.E."/>
            <person name="Nelson D."/>
            <person name="Kucherlapati R."/>
            <person name="Weinstock G."/>
            <person name="Gibbs R.A."/>
        </authorList>
    </citation>
    <scope>NUCLEOTIDE SEQUENCE [LARGE SCALE GENOMIC DNA]</scope>
</reference>
<reference key="4">
    <citation type="submission" date="2005-07" db="EMBL/GenBank/DDBJ databases">
        <authorList>
            <person name="Mural R.J."/>
            <person name="Istrail S."/>
            <person name="Sutton G.G."/>
            <person name="Florea L."/>
            <person name="Halpern A.L."/>
            <person name="Mobarry C.M."/>
            <person name="Lippert R."/>
            <person name="Walenz B."/>
            <person name="Shatkay H."/>
            <person name="Dew I."/>
            <person name="Miller J.R."/>
            <person name="Flanigan M.J."/>
            <person name="Edwards N.J."/>
            <person name="Bolanos R."/>
            <person name="Fasulo D."/>
            <person name="Halldorsson B.V."/>
            <person name="Hannenhalli S."/>
            <person name="Turner R."/>
            <person name="Yooseph S."/>
            <person name="Lu F."/>
            <person name="Nusskern D.R."/>
            <person name="Shue B.C."/>
            <person name="Zheng X.H."/>
            <person name="Zhong F."/>
            <person name="Delcher A.L."/>
            <person name="Huson D.H."/>
            <person name="Kravitz S.A."/>
            <person name="Mouchard L."/>
            <person name="Reinert K."/>
            <person name="Remington K.A."/>
            <person name="Clark A.G."/>
            <person name="Waterman M.S."/>
            <person name="Eichler E.E."/>
            <person name="Adams M.D."/>
            <person name="Hunkapiller M.W."/>
            <person name="Myers E.W."/>
            <person name="Venter J.C."/>
        </authorList>
    </citation>
    <scope>NUCLEOTIDE SEQUENCE [LARGE SCALE GENOMIC DNA]</scope>
</reference>
<reference key="5">
    <citation type="journal article" date="2004" name="Genome Res.">
        <title>The status, quality, and expansion of the NIH full-length cDNA project: the Mammalian Gene Collection (MGC).</title>
        <authorList>
            <consortium name="The MGC Project Team"/>
        </authorList>
    </citation>
    <scope>NUCLEOTIDE SEQUENCE [LARGE SCALE MRNA] (ISOFORM 2)</scope>
    <source>
        <tissue>Brain</tissue>
    </source>
</reference>
<reference key="6">
    <citation type="journal article" date="2001" name="Oncogene">
        <title>Functional interaction of Yaf2 with the central region of MycN.</title>
        <authorList>
            <person name="Bannasch D."/>
            <person name="Maedge B."/>
            <person name="Schwab M."/>
        </authorList>
    </citation>
    <scope>FUNCTION</scope>
    <scope>SUBCELLULAR LOCATION</scope>
    <scope>INTERACTION WITH MYCN</scope>
</reference>
<reference key="7">
    <citation type="journal article" date="2002" name="Science">
        <title>A complex with chromatin modifiers that occupies E2F- and Myc-responsive genes in G0 cells.</title>
        <authorList>
            <person name="Ogawa H."/>
            <person name="Ishiguro K."/>
            <person name="Gaubatz S."/>
            <person name="Livingston D.M."/>
            <person name="Nakatani Y."/>
        </authorList>
    </citation>
    <scope>IDENTIFICATION IN COMPLEX WITH E2F6; TFDP1; MAX; MGA; EUHMTASE1; CBX3; RING1; RNF2; MBLR; L3MBTL2 AND BAT8</scope>
</reference>
<reference key="8">
    <citation type="journal article" date="2003" name="Cancer Lett.">
        <title>Yaf2 inhibits Myc biological function.</title>
        <authorList>
            <person name="Maedge B."/>
            <person name="Geisen C."/>
            <person name="Moeroey T."/>
            <person name="Schwab M."/>
        </authorList>
    </citation>
    <scope>FUNCTION</scope>
    <scope>INTERACTION WITH MYC</scope>
</reference>
<reference key="9">
    <citation type="journal article" date="2007" name="Science">
        <title>ATM and ATR substrate analysis reveals extensive protein networks responsive to DNA damage.</title>
        <authorList>
            <person name="Matsuoka S."/>
            <person name="Ballif B.A."/>
            <person name="Smogorzewska A."/>
            <person name="McDonald E.R. III"/>
            <person name="Hurov K.E."/>
            <person name="Luo J."/>
            <person name="Bakalarski C.E."/>
            <person name="Zhao Z."/>
            <person name="Solimini N."/>
            <person name="Lerenthal Y."/>
            <person name="Shiloh Y."/>
            <person name="Gygi S.P."/>
            <person name="Elledge S.J."/>
        </authorList>
    </citation>
    <scope>IDENTIFICATION BY MASS SPECTROMETRY [LARGE SCALE ANALYSIS]</scope>
    <source>
        <tissue>Embryonic kidney</tissue>
    </source>
</reference>
<reference key="10">
    <citation type="journal article" date="2008" name="Proc. Natl. Acad. Sci. U.S.A.">
        <title>A quantitative atlas of mitotic phosphorylation.</title>
        <authorList>
            <person name="Dephoure N."/>
            <person name="Zhou C."/>
            <person name="Villen J."/>
            <person name="Beausoleil S.A."/>
            <person name="Bakalarski C.E."/>
            <person name="Elledge S.J."/>
            <person name="Gygi S.P."/>
        </authorList>
    </citation>
    <scope>PHOSPHORYLATION [LARGE SCALE ANALYSIS] AT SER-167</scope>
    <scope>IDENTIFICATION BY MASS SPECTROMETRY [LARGE SCALE ANALYSIS]</scope>
    <source>
        <tissue>Cervix carcinoma</tissue>
    </source>
</reference>
<reference key="11">
    <citation type="journal article" date="2009" name="Sci. Signal.">
        <title>Quantitative phosphoproteomic analysis of T cell receptor signaling reveals system-wide modulation of protein-protein interactions.</title>
        <authorList>
            <person name="Mayya V."/>
            <person name="Lundgren D.H."/>
            <person name="Hwang S.-I."/>
            <person name="Rezaul K."/>
            <person name="Wu L."/>
            <person name="Eng J.K."/>
            <person name="Rodionov V."/>
            <person name="Han D.K."/>
        </authorList>
    </citation>
    <scope>PHOSPHORYLATION [LARGE SCALE ANALYSIS] AT SER-167</scope>
    <scope>IDENTIFICATION BY MASS SPECTROMETRY [LARGE SCALE ANALYSIS]</scope>
    <source>
        <tissue>Leukemic T-cell</tissue>
    </source>
</reference>
<reference key="12">
    <citation type="journal article" date="2013" name="J. Proteome Res.">
        <title>Toward a comprehensive characterization of a human cancer cell phosphoproteome.</title>
        <authorList>
            <person name="Zhou H."/>
            <person name="Di Palma S."/>
            <person name="Preisinger C."/>
            <person name="Peng M."/>
            <person name="Polat A.N."/>
            <person name="Heck A.J."/>
            <person name="Mohammed S."/>
        </authorList>
    </citation>
    <scope>IDENTIFICATION BY MASS SPECTROMETRY [LARGE SCALE ANALYSIS]</scope>
    <source>
        <tissue>Cervix carcinoma</tissue>
        <tissue>Erythroleukemia</tissue>
    </source>
</reference>
<reference key="13">
    <citation type="submission" date="2006-06" db="PDB data bank">
        <title>Solution structure of the ZF-RANBP domain of YY1-associated factor 2.</title>
        <authorList>
            <consortium name="RIKEN structural genomics initiative (RSGI)"/>
        </authorList>
    </citation>
    <scope>STRUCTURE BY NMR OF 17-58</scope>
</reference>
<sequence>MGDKKSPTRPKRQPKPSSDEGYWDCSVCTFRNSAEAFKCMMCDVRKGTSTRKPRPVSQLVAQQVTQQFVPPTQSKKEKKDKVEKEKSEKETTSKKNSHKKTRPRLKNVDRSSAQHLEVTVGDLTVIITDFKEKTKSPPASSAASADQHSQSGSSSDNTERGMSRSSSPRGEASSLNGESH</sequence>